<name>HSCA_ECOLC</name>
<sequence length="616" mass="65652">MALLQISEPGLSAAPHQRRLAAGIDLGTTNSLVATVRSGQAETLADHEGRHLLPSVVHYQQQGHSVGYDARTNAALDTANTISSVKRLMGRSLADIQQRYPHLPYQFQASENGLPMIETAAGLLNPVRVSADILKALAARATEALAGELDGVVITVPAYFDDAQRQGTKDAARLAGLHVLRLLNEPTAAAIAYGLDSGQEGVIAVYDLGGGTFDISILRLSRGVFEVLATGGDSALGGDDFDHLLADYIREQAGIPDRSDNRVQRELLDAAIAAKIALSDADSVTVNVAGWQGEISREQFNELIAPLVKRTLLACRRALKDAGVEADEVLEVVMVGGSTRVPLVRERVGEFFGRPPLTSIDPDKVVAIGAAIQADILVGNKPDSEMLLLDVIPLSLGLETMGGLVEKVIPRNTTIPVARAQDFTTFKDGQTAMSIHVMQGERELVQDCRSLARFALRGIPALPAGGAHIRVTFQVDADGLLSVTAMEKSTGVEASIQVKPSYGLTDSEIASMIKDSMSYAEQDVKARMLAEQKVEAARVLESLHGALAADAALLSAAERQVIDDAAAHLSEVAQGDDVDAIEQAIKNVDKQTQDFAARRMDQSVRRALKGHSVDEV</sequence>
<keyword id="KW-0067">ATP-binding</keyword>
<keyword id="KW-0143">Chaperone</keyword>
<keyword id="KW-0547">Nucleotide-binding</keyword>
<proteinExistence type="inferred from homology"/>
<reference key="1">
    <citation type="submission" date="2008-02" db="EMBL/GenBank/DDBJ databases">
        <title>Complete sequence of Escherichia coli C str. ATCC 8739.</title>
        <authorList>
            <person name="Copeland A."/>
            <person name="Lucas S."/>
            <person name="Lapidus A."/>
            <person name="Glavina del Rio T."/>
            <person name="Dalin E."/>
            <person name="Tice H."/>
            <person name="Bruce D."/>
            <person name="Goodwin L."/>
            <person name="Pitluck S."/>
            <person name="Kiss H."/>
            <person name="Brettin T."/>
            <person name="Detter J.C."/>
            <person name="Han C."/>
            <person name="Kuske C.R."/>
            <person name="Schmutz J."/>
            <person name="Larimer F."/>
            <person name="Land M."/>
            <person name="Hauser L."/>
            <person name="Kyrpides N."/>
            <person name="Mikhailova N."/>
            <person name="Ingram L."/>
            <person name="Richardson P."/>
        </authorList>
    </citation>
    <scope>NUCLEOTIDE SEQUENCE [LARGE SCALE GENOMIC DNA]</scope>
    <source>
        <strain>ATCC 8739 / DSM 1576 / NBRC 3972 / NCIMB 8545 / WDCM 00012 / Crooks</strain>
    </source>
</reference>
<gene>
    <name evidence="1" type="primary">hscA</name>
    <name type="ordered locus">EcolC_1151</name>
</gene>
<comment type="function">
    <text evidence="1">Chaperone involved in the maturation of iron-sulfur cluster-containing proteins. Has a low intrinsic ATPase activity which is markedly stimulated by HscB. Involved in the maturation of IscU.</text>
</comment>
<comment type="similarity">
    <text evidence="1">Belongs to the heat shock protein 70 family.</text>
</comment>
<evidence type="ECO:0000255" key="1">
    <source>
        <dbReference type="HAMAP-Rule" id="MF_00679"/>
    </source>
</evidence>
<feature type="chain" id="PRO_1000082981" description="Chaperone protein HscA">
    <location>
        <begin position="1"/>
        <end position="616"/>
    </location>
</feature>
<organism>
    <name type="scientific">Escherichia coli (strain ATCC 8739 / DSM 1576 / NBRC 3972 / NCIMB 8545 / WDCM 00012 / Crooks)</name>
    <dbReference type="NCBI Taxonomy" id="481805"/>
    <lineage>
        <taxon>Bacteria</taxon>
        <taxon>Pseudomonadati</taxon>
        <taxon>Pseudomonadota</taxon>
        <taxon>Gammaproteobacteria</taxon>
        <taxon>Enterobacterales</taxon>
        <taxon>Enterobacteriaceae</taxon>
        <taxon>Escherichia</taxon>
    </lineage>
</organism>
<protein>
    <recommendedName>
        <fullName evidence="1">Chaperone protein HscA</fullName>
    </recommendedName>
    <alternativeName>
        <fullName evidence="1">Hsc66</fullName>
    </alternativeName>
</protein>
<dbReference type="EMBL" id="CP000946">
    <property type="protein sequence ID" value="ACA76818.1"/>
    <property type="molecule type" value="Genomic_DNA"/>
</dbReference>
<dbReference type="RefSeq" id="WP_001196613.1">
    <property type="nucleotide sequence ID" value="NZ_MTFT01000002.1"/>
</dbReference>
<dbReference type="SMR" id="B1IWD5"/>
<dbReference type="GeneID" id="93774610"/>
<dbReference type="KEGG" id="ecl:EcolC_1151"/>
<dbReference type="HOGENOM" id="CLU_005965_2_1_6"/>
<dbReference type="GO" id="GO:0005524">
    <property type="term" value="F:ATP binding"/>
    <property type="evidence" value="ECO:0007669"/>
    <property type="project" value="UniProtKB-KW"/>
</dbReference>
<dbReference type="GO" id="GO:0016887">
    <property type="term" value="F:ATP hydrolysis activity"/>
    <property type="evidence" value="ECO:0007669"/>
    <property type="project" value="UniProtKB-UniRule"/>
</dbReference>
<dbReference type="GO" id="GO:0140662">
    <property type="term" value="F:ATP-dependent protein folding chaperone"/>
    <property type="evidence" value="ECO:0007669"/>
    <property type="project" value="InterPro"/>
</dbReference>
<dbReference type="GO" id="GO:0051082">
    <property type="term" value="F:unfolded protein binding"/>
    <property type="evidence" value="ECO:0007669"/>
    <property type="project" value="InterPro"/>
</dbReference>
<dbReference type="GO" id="GO:0016226">
    <property type="term" value="P:iron-sulfur cluster assembly"/>
    <property type="evidence" value="ECO:0007669"/>
    <property type="project" value="InterPro"/>
</dbReference>
<dbReference type="CDD" id="cd10236">
    <property type="entry name" value="ASKHA_NBD_HSP70_HscA"/>
    <property type="match status" value="1"/>
</dbReference>
<dbReference type="FunFam" id="1.20.1270.10:FF:000006">
    <property type="entry name" value="Chaperone protein HscA"/>
    <property type="match status" value="1"/>
</dbReference>
<dbReference type="FunFam" id="3.30.420.40:FF:000046">
    <property type="entry name" value="Chaperone protein HscA"/>
    <property type="match status" value="1"/>
</dbReference>
<dbReference type="FunFam" id="3.90.640.10:FF:000013">
    <property type="entry name" value="Chaperone protein HscA"/>
    <property type="match status" value="1"/>
</dbReference>
<dbReference type="FunFam" id="2.60.34.10:FF:000005">
    <property type="entry name" value="Chaperone protein HscA homolog"/>
    <property type="match status" value="1"/>
</dbReference>
<dbReference type="FunFam" id="3.30.420.40:FF:000020">
    <property type="entry name" value="Chaperone protein HscA homolog"/>
    <property type="match status" value="1"/>
</dbReference>
<dbReference type="Gene3D" id="1.20.1270.10">
    <property type="match status" value="1"/>
</dbReference>
<dbReference type="Gene3D" id="3.30.420.40">
    <property type="match status" value="2"/>
</dbReference>
<dbReference type="Gene3D" id="3.90.640.10">
    <property type="entry name" value="Actin, Chain A, domain 4"/>
    <property type="match status" value="1"/>
</dbReference>
<dbReference type="Gene3D" id="2.60.34.10">
    <property type="entry name" value="Substrate Binding Domain Of DNAk, Chain A, domain 1"/>
    <property type="match status" value="1"/>
</dbReference>
<dbReference type="HAMAP" id="MF_00679">
    <property type="entry name" value="HscA"/>
    <property type="match status" value="1"/>
</dbReference>
<dbReference type="InterPro" id="IPR043129">
    <property type="entry name" value="ATPase_NBD"/>
</dbReference>
<dbReference type="InterPro" id="IPR018181">
    <property type="entry name" value="Heat_shock_70_CS"/>
</dbReference>
<dbReference type="InterPro" id="IPR042039">
    <property type="entry name" value="HscA_NBD"/>
</dbReference>
<dbReference type="InterPro" id="IPR029048">
    <property type="entry name" value="HSP70_C_sf"/>
</dbReference>
<dbReference type="InterPro" id="IPR029047">
    <property type="entry name" value="HSP70_peptide-bd_sf"/>
</dbReference>
<dbReference type="InterPro" id="IPR013126">
    <property type="entry name" value="Hsp_70_fam"/>
</dbReference>
<dbReference type="InterPro" id="IPR010236">
    <property type="entry name" value="ISC_FeS_clus_asmbl_HscA"/>
</dbReference>
<dbReference type="NCBIfam" id="TIGR01991">
    <property type="entry name" value="HscA"/>
    <property type="match status" value="1"/>
</dbReference>
<dbReference type="NCBIfam" id="NF003520">
    <property type="entry name" value="PRK05183.1"/>
    <property type="match status" value="1"/>
</dbReference>
<dbReference type="PANTHER" id="PTHR19375">
    <property type="entry name" value="HEAT SHOCK PROTEIN 70KDA"/>
    <property type="match status" value="1"/>
</dbReference>
<dbReference type="Pfam" id="PF00012">
    <property type="entry name" value="HSP70"/>
    <property type="match status" value="1"/>
</dbReference>
<dbReference type="PRINTS" id="PR00301">
    <property type="entry name" value="HEATSHOCK70"/>
</dbReference>
<dbReference type="SUPFAM" id="SSF53067">
    <property type="entry name" value="Actin-like ATPase domain"/>
    <property type="match status" value="2"/>
</dbReference>
<dbReference type="SUPFAM" id="SSF100934">
    <property type="entry name" value="Heat shock protein 70kD (HSP70), C-terminal subdomain"/>
    <property type="match status" value="1"/>
</dbReference>
<dbReference type="SUPFAM" id="SSF100920">
    <property type="entry name" value="Heat shock protein 70kD (HSP70), peptide-binding domain"/>
    <property type="match status" value="1"/>
</dbReference>
<dbReference type="PROSITE" id="PS00297">
    <property type="entry name" value="HSP70_1"/>
    <property type="match status" value="1"/>
</dbReference>
<dbReference type="PROSITE" id="PS00329">
    <property type="entry name" value="HSP70_2"/>
    <property type="match status" value="1"/>
</dbReference>
<dbReference type="PROSITE" id="PS01036">
    <property type="entry name" value="HSP70_3"/>
    <property type="match status" value="1"/>
</dbReference>
<accession>B1IWD5</accession>